<reference key="1">
    <citation type="journal article" date="1998" name="J. Bacteriol.">
        <title>The narA locus of Synechococcus sp. strain PCC 7942 consists of a cluster of molybdopterin biosynthesis genes.</title>
        <authorList>
            <person name="Rubio L.M."/>
            <person name="Flores E."/>
            <person name="Herrero A."/>
        </authorList>
    </citation>
    <scope>NUCLEOTIDE SEQUENCE [GENOMIC DNA]</scope>
</reference>
<reference key="2">
    <citation type="submission" date="2005-08" db="EMBL/GenBank/DDBJ databases">
        <title>Complete sequence of chromosome 1 of Synechococcus elongatus PCC 7942.</title>
        <authorList>
            <consortium name="US DOE Joint Genome Institute"/>
            <person name="Copeland A."/>
            <person name="Lucas S."/>
            <person name="Lapidus A."/>
            <person name="Barry K."/>
            <person name="Detter J.C."/>
            <person name="Glavina T."/>
            <person name="Hammon N."/>
            <person name="Israni S."/>
            <person name="Pitluck S."/>
            <person name="Schmutz J."/>
            <person name="Larimer F."/>
            <person name="Land M."/>
            <person name="Kyrpides N."/>
            <person name="Lykidis A."/>
            <person name="Golden S."/>
            <person name="Richardson P."/>
        </authorList>
    </citation>
    <scope>NUCLEOTIDE SEQUENCE [LARGE SCALE GENOMIC DNA]</scope>
    <source>
        <strain>ATCC 33912 / PCC 7942 / FACHB-805</strain>
    </source>
</reference>
<protein>
    <recommendedName>
        <fullName>Molybdenum cofactor biosynthesis bifunctional protein</fullName>
    </recommendedName>
    <domain>
        <recommendedName>
            <fullName evidence="1">Cyclic pyranopterin monophosphate synthase</fullName>
            <ecNumber evidence="1">4.6.1.17</ecNumber>
        </recommendedName>
        <alternativeName>
            <fullName evidence="1">Molybdenum cofactor biosynthesis protein C</fullName>
        </alternativeName>
    </domain>
    <domain>
        <recommendedName>
            <fullName>Molybdenum cofactor biosynthesis protein B</fullName>
        </recommendedName>
    </domain>
</protein>
<evidence type="ECO:0000250" key="1">
    <source>
        <dbReference type="UniProtKB" id="P0A738"/>
    </source>
</evidence>
<evidence type="ECO:0000305" key="2"/>
<proteinExistence type="inferred from homology"/>
<sequence>MIDVGDKAVTERTARAEGWIRLAPEVYQRVTQGQLPKGDGFLLAQVAGIQGAKRTADLLPLCHPLPIEGVKIDCQPLADSQTIRVEARVRTTGKTGVEMEALAAVSAALLCLYDLTKMFDATAEIGGIGLLEKTGGKSGHWQRPAIAPDVAPTGALAGVFATVITVSDRVAADQAEDRSGPLIQNWLTDQAATIATATCVADEPALIQAAIQAAIAQGSALILLTGGTGLGPRDRTPEAIADLGAIPVPGIGEALRQAGRSETVMTWLSRSGGWMLEGSFVIALPGSSRAVSSGLAMLQPLLPHSLAILKGADHGTVKG</sequence>
<organism>
    <name type="scientific">Synechococcus elongatus (strain ATCC 33912 / PCC 7942 / FACHB-805)</name>
    <name type="common">Anacystis nidulans R2</name>
    <dbReference type="NCBI Taxonomy" id="1140"/>
    <lineage>
        <taxon>Bacteria</taxon>
        <taxon>Bacillati</taxon>
        <taxon>Cyanobacteriota</taxon>
        <taxon>Cyanophyceae</taxon>
        <taxon>Synechococcales</taxon>
        <taxon>Synechococcaceae</taxon>
        <taxon>Synechococcus</taxon>
    </lineage>
</organism>
<name>MOACB_SYNE7</name>
<accession>Q56208</accession>
<accession>Q31NQ4</accession>
<keyword id="KW-0456">Lyase</keyword>
<keyword id="KW-0501">Molybdenum cofactor biosynthesis</keyword>
<keyword id="KW-1185">Reference proteome</keyword>
<feature type="chain" id="PRO_0000097849" description="Molybdenum cofactor biosynthesis bifunctional protein">
    <location>
        <begin position="1"/>
        <end position="319"/>
    </location>
</feature>
<feature type="region of interest" description="Molybdenum cofactor biosynthesis protein C">
    <location>
        <begin position="1"/>
        <end position="145"/>
    </location>
</feature>
<feature type="region of interest" description="Molybdenum cofactor biosynthesis protein B">
    <location>
        <begin position="146"/>
        <end position="319"/>
    </location>
</feature>
<feature type="active site" evidence="1">
    <location>
        <position position="114"/>
    </location>
</feature>
<feature type="binding site" evidence="1">
    <location>
        <begin position="61"/>
        <end position="63"/>
    </location>
    <ligand>
        <name>substrate</name>
    </ligand>
</feature>
<feature type="binding site" evidence="1">
    <location>
        <begin position="99"/>
        <end position="100"/>
    </location>
    <ligand>
        <name>substrate</name>
    </ligand>
</feature>
<comment type="function">
    <text evidence="1">Catalyzes the conversion of (8S)-3',8-cyclo-7,8-dihydroguanosine 5'-triphosphate to cyclic pyranopterin monophosphate (cPMP).</text>
</comment>
<comment type="catalytic activity">
    <reaction evidence="1">
        <text>(8S)-3',8-cyclo-7,8-dihydroguanosine 5'-triphosphate = cyclic pyranopterin phosphate + diphosphate</text>
        <dbReference type="Rhea" id="RHEA:49580"/>
        <dbReference type="ChEBI" id="CHEBI:33019"/>
        <dbReference type="ChEBI" id="CHEBI:59648"/>
        <dbReference type="ChEBI" id="CHEBI:131766"/>
        <dbReference type="EC" id="4.6.1.17"/>
    </reaction>
</comment>
<comment type="pathway">
    <text evidence="1">Cofactor biosynthesis; molybdopterin biosynthesis.</text>
</comment>
<comment type="similarity">
    <text evidence="2">In the N-terminal section; belongs to the MoaC family.</text>
</comment>
<comment type="similarity">
    <text evidence="2">In the C-terminal section; belongs to the MoaB/Mog family.</text>
</comment>
<comment type="sequence caution" evidence="2">
    <conflict type="erroneous initiation">
        <sequence resource="EMBL-CDS" id="ABB57315"/>
    </conflict>
</comment>
<gene>
    <name type="primary">moaCB</name>
    <name type="ordered locus">Synpcc7942_1285</name>
</gene>
<dbReference type="EC" id="4.6.1.17" evidence="1"/>
<dbReference type="EMBL" id="X99625">
    <property type="protein sequence ID" value="CAA67945.1"/>
    <property type="molecule type" value="Genomic_DNA"/>
</dbReference>
<dbReference type="EMBL" id="CP000100">
    <property type="protein sequence ID" value="ABB57315.1"/>
    <property type="status" value="ALT_INIT"/>
    <property type="molecule type" value="Genomic_DNA"/>
</dbReference>
<dbReference type="SMR" id="Q56208"/>
<dbReference type="STRING" id="1140.Synpcc7942_1285"/>
<dbReference type="PaxDb" id="1140-Synpcc7942_1285"/>
<dbReference type="KEGG" id="syf:Synpcc7942_1285"/>
<dbReference type="eggNOG" id="COG0315">
    <property type="taxonomic scope" value="Bacteria"/>
</dbReference>
<dbReference type="eggNOG" id="COG0521">
    <property type="taxonomic scope" value="Bacteria"/>
</dbReference>
<dbReference type="HOGENOM" id="CLU_063423_1_1_3"/>
<dbReference type="BioCyc" id="SYNEL:SYNPCC7942_1285-MONOMER"/>
<dbReference type="UniPathway" id="UPA00344"/>
<dbReference type="Proteomes" id="UP000889800">
    <property type="component" value="Chromosome"/>
</dbReference>
<dbReference type="GO" id="GO:0061799">
    <property type="term" value="F:cyclic pyranopterin monophosphate synthase activity"/>
    <property type="evidence" value="ECO:0007669"/>
    <property type="project" value="UniProtKB-EC"/>
</dbReference>
<dbReference type="GO" id="GO:0006777">
    <property type="term" value="P:Mo-molybdopterin cofactor biosynthetic process"/>
    <property type="evidence" value="ECO:0007669"/>
    <property type="project" value="UniProtKB-KW"/>
</dbReference>
<dbReference type="CDD" id="cd01420">
    <property type="entry name" value="MoaC_PE"/>
    <property type="match status" value="1"/>
</dbReference>
<dbReference type="CDD" id="cd00886">
    <property type="entry name" value="MogA_MoaB"/>
    <property type="match status" value="1"/>
</dbReference>
<dbReference type="Gene3D" id="3.40.980.10">
    <property type="entry name" value="MoaB/Mog-like domain"/>
    <property type="match status" value="1"/>
</dbReference>
<dbReference type="Gene3D" id="3.30.70.640">
    <property type="entry name" value="Molybdopterin cofactor biosynthesis C (MoaC) domain"/>
    <property type="match status" value="1"/>
</dbReference>
<dbReference type="InterPro" id="IPR036425">
    <property type="entry name" value="MoaB/Mog-like_dom_sf"/>
</dbReference>
<dbReference type="InterPro" id="IPR001453">
    <property type="entry name" value="MoaB/Mog_dom"/>
</dbReference>
<dbReference type="InterPro" id="IPR023045">
    <property type="entry name" value="MoaC"/>
</dbReference>
<dbReference type="InterPro" id="IPR047594">
    <property type="entry name" value="MoaC_bact/euk"/>
</dbReference>
<dbReference type="InterPro" id="IPR012247">
    <property type="entry name" value="MoaC_MogA"/>
</dbReference>
<dbReference type="InterPro" id="IPR036522">
    <property type="entry name" value="MoaC_sf"/>
</dbReference>
<dbReference type="InterPro" id="IPR008284">
    <property type="entry name" value="MoCF_biosynth_CS"/>
</dbReference>
<dbReference type="InterPro" id="IPR002820">
    <property type="entry name" value="Mopterin_CF_biosynth-C_dom"/>
</dbReference>
<dbReference type="InterPro" id="IPR051920">
    <property type="entry name" value="MPT_Adenylyltrnsfr/MoaC-Rel"/>
</dbReference>
<dbReference type="NCBIfam" id="TIGR00581">
    <property type="entry name" value="moaC"/>
    <property type="match status" value="1"/>
</dbReference>
<dbReference type="NCBIfam" id="TIGR00177">
    <property type="entry name" value="molyb_syn"/>
    <property type="match status" value="1"/>
</dbReference>
<dbReference type="NCBIfam" id="NF002947">
    <property type="entry name" value="PRK03604.1"/>
    <property type="match status" value="1"/>
</dbReference>
<dbReference type="NCBIfam" id="NF006870">
    <property type="entry name" value="PRK09364.1"/>
    <property type="match status" value="1"/>
</dbReference>
<dbReference type="PANTHER" id="PTHR43764">
    <property type="entry name" value="MOLYBDENUM COFACTOR BIOSYNTHESIS"/>
    <property type="match status" value="1"/>
</dbReference>
<dbReference type="PANTHER" id="PTHR43764:SF1">
    <property type="entry name" value="MOLYBDOPTERIN MOLYBDOTRANSFERASE"/>
    <property type="match status" value="1"/>
</dbReference>
<dbReference type="Pfam" id="PF01967">
    <property type="entry name" value="MoaC"/>
    <property type="match status" value="1"/>
</dbReference>
<dbReference type="Pfam" id="PF00994">
    <property type="entry name" value="MoCF_biosynth"/>
    <property type="match status" value="1"/>
</dbReference>
<dbReference type="PIRSF" id="PIRSF036594">
    <property type="entry name" value="MoaC_MogA"/>
    <property type="match status" value="1"/>
</dbReference>
<dbReference type="SMART" id="SM00852">
    <property type="entry name" value="MoCF_biosynth"/>
    <property type="match status" value="1"/>
</dbReference>
<dbReference type="SUPFAM" id="SSF55040">
    <property type="entry name" value="Molybdenum cofactor biosynthesis protein C, MoaC"/>
    <property type="match status" value="1"/>
</dbReference>
<dbReference type="SUPFAM" id="SSF53218">
    <property type="entry name" value="Molybdenum cofactor biosynthesis proteins"/>
    <property type="match status" value="1"/>
</dbReference>
<dbReference type="PROSITE" id="PS01078">
    <property type="entry name" value="MOCF_BIOSYNTHESIS_1"/>
    <property type="match status" value="1"/>
</dbReference>